<comment type="catalytic activity">
    <reaction evidence="1">
        <text>urea + 2 H2O + H(+) = hydrogencarbonate + 2 NH4(+)</text>
        <dbReference type="Rhea" id="RHEA:20557"/>
        <dbReference type="ChEBI" id="CHEBI:15377"/>
        <dbReference type="ChEBI" id="CHEBI:15378"/>
        <dbReference type="ChEBI" id="CHEBI:16199"/>
        <dbReference type="ChEBI" id="CHEBI:17544"/>
        <dbReference type="ChEBI" id="CHEBI:28938"/>
        <dbReference type="EC" id="3.5.1.5"/>
    </reaction>
</comment>
<comment type="pathway">
    <text evidence="1">Nitrogen metabolism; urea degradation; CO(2) and NH(3) from urea (urease route): step 1/1.</text>
</comment>
<comment type="subunit">
    <text evidence="1">Heterotrimer of UreA (gamma), UreB (beta) and UreC (alpha) subunits. Three heterotrimers associate to form the active enzyme.</text>
</comment>
<comment type="subcellular location">
    <subcellularLocation>
        <location evidence="1">Cytoplasm</location>
    </subcellularLocation>
</comment>
<comment type="similarity">
    <text evidence="1">Belongs to the urease beta subunit family.</text>
</comment>
<accession>C1APC6</accession>
<evidence type="ECO:0000255" key="1">
    <source>
        <dbReference type="HAMAP-Rule" id="MF_01954"/>
    </source>
</evidence>
<keyword id="KW-0963">Cytoplasm</keyword>
<keyword id="KW-0378">Hydrolase</keyword>
<organism>
    <name type="scientific">Mycobacterium bovis (strain BCG / Tokyo 172 / ATCC 35737 / TMC 1019)</name>
    <dbReference type="NCBI Taxonomy" id="561275"/>
    <lineage>
        <taxon>Bacteria</taxon>
        <taxon>Bacillati</taxon>
        <taxon>Actinomycetota</taxon>
        <taxon>Actinomycetes</taxon>
        <taxon>Mycobacteriales</taxon>
        <taxon>Mycobacteriaceae</taxon>
        <taxon>Mycobacterium</taxon>
        <taxon>Mycobacterium tuberculosis complex</taxon>
    </lineage>
</organism>
<gene>
    <name evidence="1" type="primary">ureB</name>
    <name type="ordered locus">JTY_1869</name>
</gene>
<reference key="1">
    <citation type="journal article" date="2009" name="Vaccine">
        <title>Whole genome sequence analysis of Mycobacterium bovis bacillus Calmette-Guerin (BCG) Tokyo 172: a comparative study of BCG vaccine substrains.</title>
        <authorList>
            <person name="Seki M."/>
            <person name="Honda I."/>
            <person name="Fujita I."/>
            <person name="Yano I."/>
            <person name="Yamamoto S."/>
            <person name="Koyama A."/>
        </authorList>
    </citation>
    <scope>NUCLEOTIDE SEQUENCE [LARGE SCALE GENOMIC DNA]</scope>
    <source>
        <strain>BCG / Tokyo 172 / ATCC 35737 / TMC 1019</strain>
    </source>
</reference>
<feature type="chain" id="PRO_1000188930" description="Urease subunit beta">
    <location>
        <begin position="1"/>
        <end position="104"/>
    </location>
</feature>
<name>URE2_MYCBT</name>
<protein>
    <recommendedName>
        <fullName evidence="1">Urease subunit beta</fullName>
        <ecNumber evidence="1">3.5.1.5</ecNumber>
    </recommendedName>
    <alternativeName>
        <fullName evidence="1">Urea amidohydrolase subunit beta</fullName>
    </alternativeName>
</protein>
<sequence length="104" mass="11190">MIPGEIFYGSGDIEMNAAALSRLQMRIINAGDRPVQVGSHVHLPQANRALSFDRATAHGYRLDIPAATAVRFEPGIPQIVGLVPLGGRREVPGLTLNPPGRLDR</sequence>
<proteinExistence type="inferred from homology"/>
<dbReference type="EC" id="3.5.1.5" evidence="1"/>
<dbReference type="EMBL" id="AP010918">
    <property type="protein sequence ID" value="BAH26155.1"/>
    <property type="molecule type" value="Genomic_DNA"/>
</dbReference>
<dbReference type="RefSeq" id="WP_003409308.1">
    <property type="nucleotide sequence ID" value="NZ_CP014566.1"/>
</dbReference>
<dbReference type="SMR" id="C1APC6"/>
<dbReference type="KEGG" id="mbt:JTY_1869"/>
<dbReference type="HOGENOM" id="CLU_129707_1_1_11"/>
<dbReference type="UniPathway" id="UPA00258">
    <property type="reaction ID" value="UER00370"/>
</dbReference>
<dbReference type="GO" id="GO:0035550">
    <property type="term" value="C:urease complex"/>
    <property type="evidence" value="ECO:0007669"/>
    <property type="project" value="InterPro"/>
</dbReference>
<dbReference type="GO" id="GO:0009039">
    <property type="term" value="F:urease activity"/>
    <property type="evidence" value="ECO:0007669"/>
    <property type="project" value="UniProtKB-UniRule"/>
</dbReference>
<dbReference type="GO" id="GO:0043419">
    <property type="term" value="P:urea catabolic process"/>
    <property type="evidence" value="ECO:0007669"/>
    <property type="project" value="UniProtKB-UniRule"/>
</dbReference>
<dbReference type="CDD" id="cd00407">
    <property type="entry name" value="Urease_beta"/>
    <property type="match status" value="1"/>
</dbReference>
<dbReference type="Gene3D" id="2.10.150.10">
    <property type="entry name" value="Urease, beta subunit"/>
    <property type="match status" value="1"/>
</dbReference>
<dbReference type="HAMAP" id="MF_01954">
    <property type="entry name" value="Urease_beta"/>
    <property type="match status" value="1"/>
</dbReference>
<dbReference type="InterPro" id="IPR002019">
    <property type="entry name" value="Urease_beta-like"/>
</dbReference>
<dbReference type="InterPro" id="IPR036461">
    <property type="entry name" value="Urease_betasu_sf"/>
</dbReference>
<dbReference type="InterPro" id="IPR050069">
    <property type="entry name" value="Urease_subunit"/>
</dbReference>
<dbReference type="NCBIfam" id="NF009681">
    <property type="entry name" value="PRK13202.1"/>
    <property type="match status" value="1"/>
</dbReference>
<dbReference type="NCBIfam" id="TIGR00192">
    <property type="entry name" value="urease_beta"/>
    <property type="match status" value="1"/>
</dbReference>
<dbReference type="PANTHER" id="PTHR33569">
    <property type="entry name" value="UREASE"/>
    <property type="match status" value="1"/>
</dbReference>
<dbReference type="PANTHER" id="PTHR33569:SF1">
    <property type="entry name" value="UREASE"/>
    <property type="match status" value="1"/>
</dbReference>
<dbReference type="Pfam" id="PF00699">
    <property type="entry name" value="Urease_beta"/>
    <property type="match status" value="1"/>
</dbReference>
<dbReference type="SUPFAM" id="SSF51278">
    <property type="entry name" value="Urease, beta-subunit"/>
    <property type="match status" value="1"/>
</dbReference>